<reference key="1">
    <citation type="journal article" date="2005" name="Mol. Vis.">
        <title>Retinal degeneration 12 (rd12): a new, spontaneously arising mouse model for human Leber congenital amaurosis (LCA).</title>
        <authorList>
            <person name="Pang J.J."/>
            <person name="Chang B."/>
            <person name="Hawes N.L."/>
            <person name="Hurd R.E."/>
            <person name="Davisson M.T."/>
            <person name="Li J."/>
            <person name="Noorwez S.M."/>
            <person name="Malhotra R."/>
            <person name="McDowell J.H."/>
            <person name="Kaushal S."/>
            <person name="Hauswirth W.W."/>
            <person name="Nusinowitz S."/>
            <person name="Thompson D.A."/>
            <person name="Heckenlively J.R."/>
        </authorList>
    </citation>
    <scope>NUCLEOTIDE SEQUENCE [MRNA]</scope>
    <scope>FUNCTION</scope>
    <scope>TISSUE SPECIFICITY</scope>
    <source>
        <strain>C57BL/6J</strain>
        <tissue>Retina</tissue>
    </source>
</reference>
<reference key="2">
    <citation type="journal article" date="2009" name="PLoS Biol.">
        <title>Lineage-specific biology revealed by a finished genome assembly of the mouse.</title>
        <authorList>
            <person name="Church D.M."/>
            <person name="Goodstadt L."/>
            <person name="Hillier L.W."/>
            <person name="Zody M.C."/>
            <person name="Goldstein S."/>
            <person name="She X."/>
            <person name="Bult C.J."/>
            <person name="Agarwala R."/>
            <person name="Cherry J.L."/>
            <person name="DiCuccio M."/>
            <person name="Hlavina W."/>
            <person name="Kapustin Y."/>
            <person name="Meric P."/>
            <person name="Maglott D."/>
            <person name="Birtle Z."/>
            <person name="Marques A.C."/>
            <person name="Graves T."/>
            <person name="Zhou S."/>
            <person name="Teague B."/>
            <person name="Potamousis K."/>
            <person name="Churas C."/>
            <person name="Place M."/>
            <person name="Herschleb J."/>
            <person name="Runnheim R."/>
            <person name="Forrest D."/>
            <person name="Amos-Landgraf J."/>
            <person name="Schwartz D.C."/>
            <person name="Cheng Z."/>
            <person name="Lindblad-Toh K."/>
            <person name="Eichler E.E."/>
            <person name="Ponting C.P."/>
        </authorList>
    </citation>
    <scope>NUCLEOTIDE SEQUENCE [LARGE SCALE GENOMIC DNA]</scope>
    <scope>VARIANT LEU-450</scope>
    <source>
        <strain>C57BL/6J</strain>
    </source>
</reference>
<reference key="3">
    <citation type="submission" date="2005-09" db="EMBL/GenBank/DDBJ databases">
        <authorList>
            <person name="Mural R.J."/>
            <person name="Adams M.D."/>
            <person name="Myers E.W."/>
            <person name="Smith H.O."/>
            <person name="Venter J.C."/>
        </authorList>
    </citation>
    <scope>NUCLEOTIDE SEQUENCE [LARGE SCALE GENOMIC DNA]</scope>
</reference>
<reference key="4">
    <citation type="journal article" date="2004" name="Genome Res.">
        <title>The status, quality, and expansion of the NIH full-length cDNA project: the Mammalian Gene Collection (MGC).</title>
        <authorList>
            <consortium name="The MGC Project Team"/>
        </authorList>
    </citation>
    <scope>NUCLEOTIDE SEQUENCE [LARGE SCALE MRNA]</scope>
</reference>
<reference key="5">
    <citation type="journal article" date="2001" name="Mol. Vis.">
        <title>Sequence and structure of the mouse gene for RPE65.</title>
        <authorList>
            <person name="Boulanger A."/>
            <person name="Liu S."/>
            <person name="Yu S."/>
            <person name="Redmond T.M."/>
        </authorList>
    </citation>
    <scope>NUCLEOTIDE SEQUENCE [GENOMIC DNA] OF 1-483</scope>
    <source>
        <strain>129/Sv</strain>
    </source>
</reference>
<reference key="6">
    <citation type="journal article" date="1998" name="Nat. Genet.">
        <title>Rpe65 is necessary for production of 11-cis-vitamin A in the retinal visual cycle.</title>
        <authorList>
            <person name="Redmond T.M."/>
            <person name="Yu S."/>
            <person name="Lee E."/>
            <person name="Bok D."/>
            <person name="Hamasaki D."/>
            <person name="Chen N."/>
            <person name="Goletz P."/>
            <person name="Ma J.X."/>
            <person name="Crouch R.K."/>
            <person name="Pfeifer K."/>
        </authorList>
    </citation>
    <scope>FUNCTION</scope>
    <scope>DISRUPTION PHENOTYPE</scope>
</reference>
<reference key="7">
    <citation type="journal article" date="2007" name="Invest. Ophthalmol. Vis. Sci.">
        <title>RPE65 is essential for the function of cone photoreceptors in NRL-deficient mice.</title>
        <authorList>
            <person name="Wenzel A."/>
            <person name="von Lintig J."/>
            <person name="Oberhauser V."/>
            <person name="Tanimoto N."/>
            <person name="Grimm C."/>
            <person name="Seeliger M.W."/>
        </authorList>
    </citation>
    <scope>FUNCTION</scope>
</reference>
<reference key="8">
    <citation type="journal article" date="2017" name="Photochem. Photobiol.">
        <title>RPE65 and the accumulation of retinyl esters in mouse retinal pigment epithelium.</title>
        <authorList>
            <person name="Sheridan C."/>
            <person name="Boyer N.P."/>
            <person name="Crouch R.K."/>
            <person name="Koutalos Y."/>
        </authorList>
    </citation>
    <scope>FUNCTION</scope>
    <scope>DISRUPTION PHENOTYPE</scope>
</reference>
<reference key="9">
    <citation type="journal article" date="2001" name="J. Neurosci.">
        <title>The Rpe65 Leu450Met variation increases retinal resistance against light-induced degeneration by slowing rhodopsin regeneration.</title>
        <authorList>
            <person name="Wenzel A."/>
            <person name="Reme C.E."/>
            <person name="Williams T.P."/>
            <person name="Hafezi F."/>
            <person name="Grimm C."/>
        </authorList>
    </citation>
    <scope>VARIANT LEU-450</scope>
</reference>
<reference key="10">
    <citation type="journal article" date="2013" name="J. Neurosci.">
        <title>Fatty acid transport protein 4 (FATP4) prevents light-induced degeneration of cone and rod photoreceptors by inhibiting RPE65 isomerase.</title>
        <authorList>
            <person name="Li S."/>
            <person name="Lee J."/>
            <person name="Zhou Y."/>
            <person name="Gordon W.C."/>
            <person name="Hill J.M."/>
            <person name="Bazan N.G."/>
            <person name="Miner J.H."/>
            <person name="Jin M."/>
        </authorList>
    </citation>
    <scope>FUNCTION</scope>
    <scope>CATALYTIC ACTIVITY</scope>
    <scope>TISSUE SPECIFICITY</scope>
</reference>
<reference key="11">
    <citation type="journal article" date="2018" name="Hum. Mol. Genet.">
        <title>Insights into the pathogenesis of dominant retinitis pigmentosa associated with a D477G mutation in RPE65.</title>
        <authorList>
            <person name="Choi E.H."/>
            <person name="Suh S."/>
            <person name="Sander C.L."/>
            <person name="Hernandez C.J.O."/>
            <person name="Bulman E.R."/>
            <person name="Khadka N."/>
            <person name="Dong Z."/>
            <person name="Shi W."/>
            <person name="Palczewski K."/>
            <person name="Kiser P.D."/>
        </authorList>
    </citation>
    <scope>MUTAGENESIS OF ASP-477</scope>
</reference>
<reference key="12">
    <citation type="journal article" date="2019" name="Hum. Mutat.">
        <title>Aberrant RNA splicing is the major pathogenic effect in a knock-in mouse model of the dominantly inherited c.1430A&gt;G human RPE65 mutation.</title>
        <authorList>
            <person name="Li Y."/>
            <person name="Furhang R."/>
            <person name="Ray A."/>
            <person name="Duncan T."/>
            <person name="Soucy J."/>
            <person name="Mahdi R."/>
            <person name="Chaitankar V."/>
            <person name="Gieser L."/>
            <person name="Poliakov E."/>
            <person name="Qian H."/>
            <person name="Liu P."/>
            <person name="Dong L."/>
            <person name="Rogozin I.B."/>
            <person name="Redmond T.M."/>
        </authorList>
    </citation>
    <scope>MUTAGENESIS OF ASP-477</scope>
</reference>
<protein>
    <recommendedName>
        <fullName>Retinoid isomerohydrolase</fullName>
        <ecNumber evidence="8">3.1.1.64</ecNumber>
    </recommendedName>
    <alternativeName>
        <fullName>All-trans-retinyl-palmitate hydrolase</fullName>
    </alternativeName>
    <alternativeName>
        <fullName>Lutein isomerase</fullName>
    </alternativeName>
    <alternativeName>
        <fullName>Meso-zeaxanthin isomerase</fullName>
        <ecNumber evidence="2">5.3.3.22</ecNumber>
    </alternativeName>
    <alternativeName>
        <fullName>Retinal pigment epithelium-specific 65 kDa protein</fullName>
    </alternativeName>
    <alternativeName>
        <fullName>Retinol isomerase</fullName>
    </alternativeName>
</protein>
<sequence length="533" mass="61085">MSIQIEHPAGGYKKLFETVEELSSPLTAHVTGRIPLWLTGSLLRCGPGLFEVGSEPFYHLFDGQALLHKFDFKEGHVTYHRRFIRTDAYVRAMTEKRIVITEFGTCAFPDPCKNIFSRFFSYFKGVEVTDNALVNIYPVGEDYYACTETNFITKINPETLETIKQVDLCNYISVNGATAHPHIESDGTVYNIGNCFGKNFTVAYNIIKIPPLKADKEDPINKSEVVVQFPCSDRFKPSYVHSFGLTPNYIVFVETPVKINLFKFLSSWSLWGANYMDCFESNESMGVWLHVADKKRRKYFNNKYRTSPFNLFHHINTYEDNGFLIVDLCCWKGFEFVYNYLYLANLRENWEEVKRNAMKAPQPEVRRYVLPLTIDKVDTGRNLVTLPHTTATATLRSDETIWLEPEVLFSGPRQAFEFPQINYQKFGGKPYTYAYGLGLNHFVPDKLCKMNVKTKEIWMWQEPDSYPSEPIFVSQPDALEEDDGVVLSVVVSPGAGQKPAYLLVLNAKDLSEIARAEVETNIPVTFHGLFKRS</sequence>
<comment type="function">
    <text evidence="2 3 5 6 8 9 12">Critical isomerohydrolase in the retinoid cycle involved in regeneration of 11-cis-retinal, the chromophore of rod and cone opsins. Catalyzes the cleavage and isomerization of all-trans-retinyl fatty acid esters to 11-cis-retinol which is further oxidized by 11-cis retinol dehydrogenase to 11-cis-retinal for use as visual chromophore (PubMed:15765048, PubMed:23407971, PubMed:28500718, PubMed:9843205). Essential for the production of 11-cis retinal for both rod and cone photoreceptors (PubMed:17251447). Also capable of catalyzing the isomerization of lutein to meso-zeaxanthin an eye-specific carotenoid. The soluble form binds vitamin A (all-trans-retinol), making it available for LRAT processing to all-trans-retinyl ester. The membrane form, palmitoylated by LRAT, binds all-trans-retinyl esters, making them available for IMH (isomerohydrolase) processing to all-cis-retinol. The soluble form is regenerated by transferring its palmitoyl groups onto 11-cis-retinol, a reaction catalyzed by LRAT (By similarity).</text>
</comment>
<comment type="catalytic activity">
    <reaction evidence="8">
        <text>an all-trans-retinyl ester + H2O = 11-cis-retinol + a fatty acid + H(+)</text>
        <dbReference type="Rhea" id="RHEA:31771"/>
        <dbReference type="ChEBI" id="CHEBI:15377"/>
        <dbReference type="ChEBI" id="CHEBI:15378"/>
        <dbReference type="ChEBI" id="CHEBI:16302"/>
        <dbReference type="ChEBI" id="CHEBI:28868"/>
        <dbReference type="ChEBI" id="CHEBI:63410"/>
        <dbReference type="EC" id="3.1.1.64"/>
    </reaction>
</comment>
<comment type="catalytic activity">
    <reaction evidence="2">
        <text>lutein = (3R,3'S)-zeaxanthin</text>
        <dbReference type="Rhea" id="RHEA:12729"/>
        <dbReference type="ChEBI" id="CHEBI:28838"/>
        <dbReference type="ChEBI" id="CHEBI:138919"/>
        <dbReference type="EC" id="5.3.3.22"/>
    </reaction>
</comment>
<comment type="catalytic activity">
    <reaction evidence="2">
        <text>all-trans-retinyl hexadecanoate + H2O = 11-cis-retinol + hexadecanoate + H(+)</text>
        <dbReference type="Rhea" id="RHEA:31775"/>
        <dbReference type="ChEBI" id="CHEBI:7896"/>
        <dbReference type="ChEBI" id="CHEBI:15377"/>
        <dbReference type="ChEBI" id="CHEBI:15378"/>
        <dbReference type="ChEBI" id="CHEBI:16302"/>
        <dbReference type="ChEBI" id="CHEBI:17616"/>
        <dbReference type="EC" id="3.1.1.64"/>
    </reaction>
</comment>
<comment type="cofactor">
    <cofactor evidence="3">
        <name>Fe(2+)</name>
        <dbReference type="ChEBI" id="CHEBI:29033"/>
    </cofactor>
    <text evidence="3">Binds 1 Fe(2+) ion per subunit.</text>
</comment>
<comment type="subunit">
    <text evidence="2">Interacts with MYO7A; this mediates light-dependent intracellular transport of RPE65.</text>
</comment>
<comment type="interaction">
    <interactant intactId="EBI-11682496">
        <id>Q91ZQ5</id>
    </interactant>
    <interactant intactId="EBI-1149557">
        <id>P97479</id>
        <label>Myo7a</label>
    </interactant>
    <organismsDiffer>false</organismsDiffer>
    <experiments>3</experiments>
</comment>
<comment type="subcellular location">
    <subcellularLocation>
        <location evidence="1">Cytoplasm</location>
    </subcellularLocation>
    <subcellularLocation>
        <location evidence="3">Cell membrane</location>
        <topology evidence="3">Lipid-anchor</topology>
    </subcellularLocation>
    <subcellularLocation>
        <location evidence="3">Microsome membrane</location>
    </subcellularLocation>
    <text evidence="2 3">Attached to the membrane by a lipid anchor when palmitoylated (membrane form), soluble when unpalmitoylated. Undergoes light-dependent intracellular transport to become more concentrated in the central region of the retina pigment epithelium cells (By similarity).</text>
</comment>
<comment type="tissue specificity">
    <text evidence="5 8">Retinal pigment epithelium specific.</text>
</comment>
<comment type="PTM">
    <text evidence="3">Palmitoylation by LRAT regulates ligand binding specificity; the palmitoylated form (membrane form) specifically binds all-trans-retinyl-palmitate, while the soluble unpalmitoylated form binds all-trans-retinol (vitamin A).</text>
</comment>
<comment type="disease">
    <text evidence="14">Defects in Rpe65 are the cause of light damage susceptibility (LDS) of the retina.</text>
</comment>
<comment type="disruption phenotype">
    <text evidence="9 12">Mice exhibit changes in retinal physiology and biochemistry. Outer segment disks of rod photoreceptors are disorganized, rod function is abolished although cone function remains. Mice lack rhodopsin, but not opsin apoprotein. Furthermore, all-trans-retinyl esters over-accumulate in the retinal pigment epithelium, whereas 11-cis-retinyl esters are absent.</text>
</comment>
<comment type="similarity">
    <text evidence="13">Belongs to the carotenoid oxygenase family.</text>
</comment>
<proteinExistence type="evidence at protein level"/>
<dbReference type="EC" id="3.1.1.64" evidence="8"/>
<dbReference type="EC" id="5.3.3.22" evidence="2"/>
<dbReference type="EMBL" id="AF410461">
    <property type="protein sequence ID" value="AAL01119.1"/>
    <property type="molecule type" value="mRNA"/>
</dbReference>
<dbReference type="EMBL" id="AC163272">
    <property type="status" value="NOT_ANNOTATED_CDS"/>
    <property type="molecule type" value="Genomic_DNA"/>
</dbReference>
<dbReference type="EMBL" id="CH466532">
    <property type="protein sequence ID" value="EDL11842.1"/>
    <property type="molecule type" value="Genomic_DNA"/>
</dbReference>
<dbReference type="EMBL" id="BC130028">
    <property type="protein sequence ID" value="AAI30029.1"/>
    <property type="molecule type" value="mRNA"/>
</dbReference>
<dbReference type="EMBL" id="AH011240">
    <property type="protein sequence ID" value="AAL39096.1"/>
    <property type="molecule type" value="Genomic_DNA"/>
</dbReference>
<dbReference type="CCDS" id="CCDS38683.1"/>
<dbReference type="RefSeq" id="NP_084263.2">
    <property type="nucleotide sequence ID" value="NM_029987.2"/>
</dbReference>
<dbReference type="SMR" id="Q91ZQ5"/>
<dbReference type="CORUM" id="Q91ZQ5"/>
<dbReference type="FunCoup" id="Q91ZQ5">
    <property type="interactions" value="306"/>
</dbReference>
<dbReference type="IntAct" id="Q91ZQ5">
    <property type="interactions" value="1"/>
</dbReference>
<dbReference type="STRING" id="10090.ENSMUSP00000143654"/>
<dbReference type="ChEMBL" id="CHEMBL5483001"/>
<dbReference type="iPTMnet" id="Q91ZQ5"/>
<dbReference type="PhosphoSitePlus" id="Q91ZQ5"/>
<dbReference type="PaxDb" id="10090-ENSMUSP00000029824"/>
<dbReference type="ProteomicsDB" id="299871"/>
<dbReference type="Antibodypedia" id="33418">
    <property type="antibodies" value="252 antibodies from 32 providers"/>
</dbReference>
<dbReference type="DNASU" id="19892"/>
<dbReference type="Ensembl" id="ENSMUST00000029824.9">
    <property type="protein sequence ID" value="ENSMUSP00000029824.9"/>
    <property type="gene ID" value="ENSMUSG00000028174.13"/>
</dbReference>
<dbReference type="Ensembl" id="ENSMUST00000196999.5">
    <property type="protein sequence ID" value="ENSMUSP00000143654.2"/>
    <property type="gene ID" value="ENSMUSG00000028174.13"/>
</dbReference>
<dbReference type="GeneID" id="19892"/>
<dbReference type="KEGG" id="mmu:19892"/>
<dbReference type="UCSC" id="uc008rwb.1">
    <property type="organism name" value="mouse"/>
</dbReference>
<dbReference type="AGR" id="MGI:98001"/>
<dbReference type="CTD" id="6121"/>
<dbReference type="MGI" id="MGI:98001">
    <property type="gene designation" value="Rpe65"/>
</dbReference>
<dbReference type="VEuPathDB" id="HostDB:ENSMUSG00000028174"/>
<dbReference type="eggNOG" id="KOG1285">
    <property type="taxonomic scope" value="Eukaryota"/>
</dbReference>
<dbReference type="GeneTree" id="ENSGT00950000182913"/>
<dbReference type="InParanoid" id="Q91ZQ5"/>
<dbReference type="OMA" id="VHHPFDG"/>
<dbReference type="OrthoDB" id="1069523at2759"/>
<dbReference type="PhylomeDB" id="Q91ZQ5"/>
<dbReference type="TreeFam" id="TF314019"/>
<dbReference type="BRENDA" id="3.1.1.64">
    <property type="organism ID" value="3474"/>
</dbReference>
<dbReference type="Reactome" id="R-MMU-2453902">
    <property type="pathway name" value="The canonical retinoid cycle in rods (twilight vision)"/>
</dbReference>
<dbReference type="BioGRID-ORCS" id="19892">
    <property type="hits" value="1 hit in 76 CRISPR screens"/>
</dbReference>
<dbReference type="PRO" id="PR:Q91ZQ5"/>
<dbReference type="Proteomes" id="UP000000589">
    <property type="component" value="Chromosome 3"/>
</dbReference>
<dbReference type="RNAct" id="Q91ZQ5">
    <property type="molecule type" value="protein"/>
</dbReference>
<dbReference type="Bgee" id="ENSMUSG00000028174">
    <property type="expression patterns" value="Expressed in pigmented layer of retina and 12 other cell types or tissues"/>
</dbReference>
<dbReference type="ExpressionAtlas" id="Q91ZQ5">
    <property type="expression patterns" value="baseline and differential"/>
</dbReference>
<dbReference type="GO" id="GO:0044297">
    <property type="term" value="C:cell body"/>
    <property type="evidence" value="ECO:0007669"/>
    <property type="project" value="Ensembl"/>
</dbReference>
<dbReference type="GO" id="GO:0005737">
    <property type="term" value="C:cytoplasm"/>
    <property type="evidence" value="ECO:0000314"/>
    <property type="project" value="UniProtKB"/>
</dbReference>
<dbReference type="GO" id="GO:0005789">
    <property type="term" value="C:endoplasmic reticulum membrane"/>
    <property type="evidence" value="ECO:0000250"/>
    <property type="project" value="UniProtKB"/>
</dbReference>
<dbReference type="GO" id="GO:0016020">
    <property type="term" value="C:membrane"/>
    <property type="evidence" value="ECO:0000250"/>
    <property type="project" value="AgBase"/>
</dbReference>
<dbReference type="GO" id="GO:0005634">
    <property type="term" value="C:nucleus"/>
    <property type="evidence" value="ECO:0000314"/>
    <property type="project" value="UniProtKB"/>
</dbReference>
<dbReference type="GO" id="GO:0005886">
    <property type="term" value="C:plasma membrane"/>
    <property type="evidence" value="ECO:0000314"/>
    <property type="project" value="UniProtKB"/>
</dbReference>
<dbReference type="GO" id="GO:0052885">
    <property type="term" value="F:all-trans-retinyl-ester hydrolase, 11-cis retinol forming activity"/>
    <property type="evidence" value="ECO:0000250"/>
    <property type="project" value="AgBase"/>
</dbReference>
<dbReference type="GO" id="GO:0052884">
    <property type="term" value="F:all-trans-retinyl-palmitate hydrolase, 11-cis retinol forming activity"/>
    <property type="evidence" value="ECO:0000250"/>
    <property type="project" value="UniProtKB"/>
</dbReference>
<dbReference type="GO" id="GO:1901612">
    <property type="term" value="F:cardiolipin binding"/>
    <property type="evidence" value="ECO:0000250"/>
    <property type="project" value="AgBase"/>
</dbReference>
<dbReference type="GO" id="GO:0016853">
    <property type="term" value="F:isomerase activity"/>
    <property type="evidence" value="ECO:0000250"/>
    <property type="project" value="UniProtKB"/>
</dbReference>
<dbReference type="GO" id="GO:0046872">
    <property type="term" value="F:metal ion binding"/>
    <property type="evidence" value="ECO:0007669"/>
    <property type="project" value="UniProtKB-KW"/>
</dbReference>
<dbReference type="GO" id="GO:0016702">
    <property type="term" value="F:oxidoreductase activity, acting on single donors with incorporation of molecular oxygen, incorporation of two atoms of oxygen"/>
    <property type="evidence" value="ECO:0007669"/>
    <property type="project" value="InterPro"/>
</dbReference>
<dbReference type="GO" id="GO:0031210">
    <property type="term" value="F:phosphatidylcholine binding"/>
    <property type="evidence" value="ECO:0000250"/>
    <property type="project" value="AgBase"/>
</dbReference>
<dbReference type="GO" id="GO:0001786">
    <property type="term" value="F:phosphatidylserine binding"/>
    <property type="evidence" value="ECO:0000250"/>
    <property type="project" value="AgBase"/>
</dbReference>
<dbReference type="GO" id="GO:0007623">
    <property type="term" value="P:circadian rhythm"/>
    <property type="evidence" value="ECO:0007669"/>
    <property type="project" value="Ensembl"/>
</dbReference>
<dbReference type="GO" id="GO:0050908">
    <property type="term" value="P:detection of light stimulus involved in visual perception"/>
    <property type="evidence" value="ECO:0007669"/>
    <property type="project" value="Ensembl"/>
</dbReference>
<dbReference type="GO" id="GO:0003407">
    <property type="term" value="P:neural retina development"/>
    <property type="evidence" value="ECO:0007669"/>
    <property type="project" value="Ensembl"/>
</dbReference>
<dbReference type="GO" id="GO:0001895">
    <property type="term" value="P:retina homeostasis"/>
    <property type="evidence" value="ECO:0007669"/>
    <property type="project" value="Ensembl"/>
</dbReference>
<dbReference type="GO" id="GO:0042574">
    <property type="term" value="P:retinal metabolic process"/>
    <property type="evidence" value="ECO:0007669"/>
    <property type="project" value="Ensembl"/>
</dbReference>
<dbReference type="GO" id="GO:0001523">
    <property type="term" value="P:retinoid metabolic process"/>
    <property type="evidence" value="ECO:0000250"/>
    <property type="project" value="UniProtKB"/>
</dbReference>
<dbReference type="GO" id="GO:1901827">
    <property type="term" value="P:zeaxanthin biosynthetic process"/>
    <property type="evidence" value="ECO:0000250"/>
    <property type="project" value="UniProtKB"/>
</dbReference>
<dbReference type="InterPro" id="IPR004294">
    <property type="entry name" value="Carotenoid_Oase"/>
</dbReference>
<dbReference type="PANTHER" id="PTHR10543">
    <property type="entry name" value="BETA-CAROTENE DIOXYGENASE"/>
    <property type="match status" value="1"/>
</dbReference>
<dbReference type="PANTHER" id="PTHR10543:SF57">
    <property type="entry name" value="RETINOID ISOMEROHYDROLASE"/>
    <property type="match status" value="1"/>
</dbReference>
<dbReference type="Pfam" id="PF03055">
    <property type="entry name" value="RPE65"/>
    <property type="match status" value="1"/>
</dbReference>
<accession>Q91ZQ5</accession>
<accession>A1L3D1</accession>
<accession>E9QNS6</accession>
<accession>H9KUX9</accession>
<accession>Q8VHP2</accession>
<feature type="initiator methionine" description="Removed" evidence="3">
    <location>
        <position position="1"/>
    </location>
</feature>
<feature type="chain" id="PRO_0000143944" description="Retinoid isomerohydrolase">
    <location>
        <begin position="2"/>
        <end position="533"/>
    </location>
</feature>
<feature type="binding site" evidence="3">
    <location>
        <position position="180"/>
    </location>
    <ligand>
        <name>Fe cation</name>
        <dbReference type="ChEBI" id="CHEBI:24875"/>
        <note>catalytic</note>
    </ligand>
</feature>
<feature type="binding site" evidence="3">
    <location>
        <position position="241"/>
    </location>
    <ligand>
        <name>Fe cation</name>
        <dbReference type="ChEBI" id="CHEBI:24875"/>
        <note>catalytic</note>
    </ligand>
</feature>
<feature type="binding site" evidence="3">
    <location>
        <position position="313"/>
    </location>
    <ligand>
        <name>Fe cation</name>
        <dbReference type="ChEBI" id="CHEBI:24875"/>
        <note>catalytic</note>
    </ligand>
</feature>
<feature type="binding site" evidence="3">
    <location>
        <position position="527"/>
    </location>
    <ligand>
        <name>Fe cation</name>
        <dbReference type="ChEBI" id="CHEBI:24875"/>
        <note>catalytic</note>
    </ligand>
</feature>
<feature type="modified residue" description="N-acetylserine" evidence="3">
    <location>
        <position position="2"/>
    </location>
</feature>
<feature type="modified residue" description="Phosphothreonine" evidence="2">
    <location>
        <position position="101"/>
    </location>
</feature>
<feature type="modified residue" description="Phosphothreonine" evidence="2">
    <location>
        <position position="105"/>
    </location>
</feature>
<feature type="modified residue" description="N6-acetyllysine" evidence="2">
    <location>
        <position position="113"/>
    </location>
</feature>
<feature type="modified residue" description="Phosphoserine" evidence="2">
    <location>
        <position position="117"/>
    </location>
</feature>
<feature type="lipid moiety-binding region" description="S-palmitoyl cysteine; in membrane form" evidence="3">
    <location>
        <position position="112"/>
    </location>
</feature>
<feature type="lipid moiety-binding region" description="S-palmitoyl cysteine; in membrane form" evidence="3">
    <location>
        <position position="231"/>
    </location>
</feature>
<feature type="lipid moiety-binding region" description="S-palmitoyl cysteine; in membrane form" evidence="3">
    <location>
        <position position="329"/>
    </location>
</feature>
<feature type="lipid moiety-binding region" description="S-palmitoyl cysteine; in membrane form" evidence="3">
    <location>
        <position position="330"/>
    </location>
</feature>
<feature type="sequence variant" description="Increased light damage susceptibility." evidence="4 7">
    <original>M</original>
    <variation>L</variation>
    <location>
        <position position="450"/>
    </location>
</feature>
<feature type="mutagenesis site" description="Knockin mice exhibit mild age-dependent degeneration of retinal structure and function; Knockin mice exhibit adequate isomerization activity with an accumulation of retinyl esters and a delay in rhodopsin regeneration kinetics and diminished electroretinography responses. Retinae of knockin mice are more sensitive to light exposition and exhibit signs of degenerative features when sujected to light stress. May cause abnormal splicing mRNAs thereby decreasing protein levels." evidence="10 11">
    <original>D</original>
    <variation>G</variation>
    <location>
        <position position="477"/>
    </location>
</feature>
<evidence type="ECO:0000250" key="1">
    <source>
        <dbReference type="UniProtKB" id="A9C3R9"/>
    </source>
</evidence>
<evidence type="ECO:0000250" key="2">
    <source>
        <dbReference type="UniProtKB" id="Q16518"/>
    </source>
</evidence>
<evidence type="ECO:0000250" key="3">
    <source>
        <dbReference type="UniProtKB" id="Q28175"/>
    </source>
</evidence>
<evidence type="ECO:0000269" key="4">
    <source>
    </source>
</evidence>
<evidence type="ECO:0000269" key="5">
    <source>
    </source>
</evidence>
<evidence type="ECO:0000269" key="6">
    <source>
    </source>
</evidence>
<evidence type="ECO:0000269" key="7">
    <source>
    </source>
</evidence>
<evidence type="ECO:0000269" key="8">
    <source>
    </source>
</evidence>
<evidence type="ECO:0000269" key="9">
    <source>
    </source>
</evidence>
<evidence type="ECO:0000269" key="10">
    <source>
    </source>
</evidence>
<evidence type="ECO:0000269" key="11">
    <source>
    </source>
</evidence>
<evidence type="ECO:0000269" key="12">
    <source>
    </source>
</evidence>
<evidence type="ECO:0000305" key="13"/>
<evidence type="ECO:0000305" key="14">
    <source>
    </source>
</evidence>
<keyword id="KW-0007">Acetylation</keyword>
<keyword id="KW-1003">Cell membrane</keyword>
<keyword id="KW-0963">Cytoplasm</keyword>
<keyword id="KW-0225">Disease variant</keyword>
<keyword id="KW-0256">Endoplasmic reticulum</keyword>
<keyword id="KW-0378">Hydrolase</keyword>
<keyword id="KW-0408">Iron</keyword>
<keyword id="KW-0413">Isomerase</keyword>
<keyword id="KW-0443">Lipid metabolism</keyword>
<keyword id="KW-0449">Lipoprotein</keyword>
<keyword id="KW-0472">Membrane</keyword>
<keyword id="KW-0479">Metal-binding</keyword>
<keyword id="KW-0492">Microsome</keyword>
<keyword id="KW-0564">Palmitate</keyword>
<keyword id="KW-0597">Phosphoprotein</keyword>
<keyword id="KW-1185">Reference proteome</keyword>
<keyword id="KW-0716">Sensory transduction</keyword>
<keyword id="KW-0844">Vision</keyword>
<gene>
    <name type="primary">Rpe65</name>
</gene>
<name>RPE65_MOUSE</name>
<organism>
    <name type="scientific">Mus musculus</name>
    <name type="common">Mouse</name>
    <dbReference type="NCBI Taxonomy" id="10090"/>
    <lineage>
        <taxon>Eukaryota</taxon>
        <taxon>Metazoa</taxon>
        <taxon>Chordata</taxon>
        <taxon>Craniata</taxon>
        <taxon>Vertebrata</taxon>
        <taxon>Euteleostomi</taxon>
        <taxon>Mammalia</taxon>
        <taxon>Eutheria</taxon>
        <taxon>Euarchontoglires</taxon>
        <taxon>Glires</taxon>
        <taxon>Rodentia</taxon>
        <taxon>Myomorpha</taxon>
        <taxon>Muroidea</taxon>
        <taxon>Muridae</taxon>
        <taxon>Murinae</taxon>
        <taxon>Mus</taxon>
        <taxon>Mus</taxon>
    </lineage>
</organism>